<protein>
    <recommendedName>
        <fullName evidence="2">Small ribosomal subunit protein uS8</fullName>
    </recommendedName>
    <alternativeName>
        <fullName evidence="3">30S ribosomal protein S8</fullName>
    </alternativeName>
</protein>
<accession>Q3YWV3</accession>
<gene>
    <name evidence="2" type="primary">rpsH</name>
    <name type="ordered locus">SSON_3447</name>
</gene>
<proteinExistence type="inferred from homology"/>
<name>RS8_SHISS</name>
<sequence>MSMQDPIADMLTRIRNGQAANKAAVTMPSSKLKVAIANVLKEEGFIEDFKVEGDTKPELELTLKYFQGKAVVESIQRVSRPGLRIYKRKDELPKVMAGLGIAVVSTSKGVMTDRAARQAGLGGEIICYVA</sequence>
<comment type="function">
    <text evidence="2">One of the primary rRNA binding proteins, it binds directly to 16S rRNA central domain where it helps coordinate assembly of the platform of the 30S subunit.</text>
</comment>
<comment type="subunit">
    <text evidence="2">Part of the 30S ribosomal subunit. Contacts proteins S5 and S12.</text>
</comment>
<comment type="similarity">
    <text evidence="2">Belongs to the universal ribosomal protein uS8 family.</text>
</comment>
<dbReference type="EMBL" id="CP000038">
    <property type="protein sequence ID" value="AAZ90009.1"/>
    <property type="molecule type" value="Genomic_DNA"/>
</dbReference>
<dbReference type="RefSeq" id="WP_000062611.1">
    <property type="nucleotide sequence ID" value="NC_007384.1"/>
</dbReference>
<dbReference type="SMR" id="Q3YWV3"/>
<dbReference type="GeneID" id="93778681"/>
<dbReference type="KEGG" id="ssn:SSON_3447"/>
<dbReference type="HOGENOM" id="CLU_098428_0_0_6"/>
<dbReference type="Proteomes" id="UP000002529">
    <property type="component" value="Chromosome"/>
</dbReference>
<dbReference type="GO" id="GO:1990904">
    <property type="term" value="C:ribonucleoprotein complex"/>
    <property type="evidence" value="ECO:0007669"/>
    <property type="project" value="UniProtKB-KW"/>
</dbReference>
<dbReference type="GO" id="GO:0005840">
    <property type="term" value="C:ribosome"/>
    <property type="evidence" value="ECO:0007669"/>
    <property type="project" value="UniProtKB-KW"/>
</dbReference>
<dbReference type="GO" id="GO:0019843">
    <property type="term" value="F:rRNA binding"/>
    <property type="evidence" value="ECO:0007669"/>
    <property type="project" value="UniProtKB-UniRule"/>
</dbReference>
<dbReference type="GO" id="GO:0003735">
    <property type="term" value="F:structural constituent of ribosome"/>
    <property type="evidence" value="ECO:0007669"/>
    <property type="project" value="InterPro"/>
</dbReference>
<dbReference type="GO" id="GO:0006412">
    <property type="term" value="P:translation"/>
    <property type="evidence" value="ECO:0007669"/>
    <property type="project" value="UniProtKB-UniRule"/>
</dbReference>
<dbReference type="FunFam" id="3.30.1370.30:FF:000003">
    <property type="entry name" value="30S ribosomal protein S8"/>
    <property type="match status" value="1"/>
</dbReference>
<dbReference type="FunFam" id="3.30.1490.10:FF:000001">
    <property type="entry name" value="30S ribosomal protein S8"/>
    <property type="match status" value="1"/>
</dbReference>
<dbReference type="Gene3D" id="3.30.1370.30">
    <property type="match status" value="1"/>
</dbReference>
<dbReference type="Gene3D" id="3.30.1490.10">
    <property type="match status" value="1"/>
</dbReference>
<dbReference type="HAMAP" id="MF_01302_B">
    <property type="entry name" value="Ribosomal_uS8_B"/>
    <property type="match status" value="1"/>
</dbReference>
<dbReference type="InterPro" id="IPR000630">
    <property type="entry name" value="Ribosomal_uS8"/>
</dbReference>
<dbReference type="InterPro" id="IPR047863">
    <property type="entry name" value="Ribosomal_uS8_CS"/>
</dbReference>
<dbReference type="InterPro" id="IPR035987">
    <property type="entry name" value="Ribosomal_uS8_sf"/>
</dbReference>
<dbReference type="NCBIfam" id="NF001109">
    <property type="entry name" value="PRK00136.1"/>
    <property type="match status" value="1"/>
</dbReference>
<dbReference type="PANTHER" id="PTHR11758">
    <property type="entry name" value="40S RIBOSOMAL PROTEIN S15A"/>
    <property type="match status" value="1"/>
</dbReference>
<dbReference type="Pfam" id="PF00410">
    <property type="entry name" value="Ribosomal_S8"/>
    <property type="match status" value="1"/>
</dbReference>
<dbReference type="SUPFAM" id="SSF56047">
    <property type="entry name" value="Ribosomal protein S8"/>
    <property type="match status" value="1"/>
</dbReference>
<dbReference type="PROSITE" id="PS00053">
    <property type="entry name" value="RIBOSOMAL_S8"/>
    <property type="match status" value="1"/>
</dbReference>
<evidence type="ECO:0000250" key="1"/>
<evidence type="ECO:0000255" key="2">
    <source>
        <dbReference type="HAMAP-Rule" id="MF_01302"/>
    </source>
</evidence>
<evidence type="ECO:0000305" key="3"/>
<organism>
    <name type="scientific">Shigella sonnei (strain Ss046)</name>
    <dbReference type="NCBI Taxonomy" id="300269"/>
    <lineage>
        <taxon>Bacteria</taxon>
        <taxon>Pseudomonadati</taxon>
        <taxon>Pseudomonadota</taxon>
        <taxon>Gammaproteobacteria</taxon>
        <taxon>Enterobacterales</taxon>
        <taxon>Enterobacteriaceae</taxon>
        <taxon>Shigella</taxon>
    </lineage>
</organism>
<reference key="1">
    <citation type="journal article" date="2005" name="Nucleic Acids Res.">
        <title>Genome dynamics and diversity of Shigella species, the etiologic agents of bacillary dysentery.</title>
        <authorList>
            <person name="Yang F."/>
            <person name="Yang J."/>
            <person name="Zhang X."/>
            <person name="Chen L."/>
            <person name="Jiang Y."/>
            <person name="Yan Y."/>
            <person name="Tang X."/>
            <person name="Wang J."/>
            <person name="Xiong Z."/>
            <person name="Dong J."/>
            <person name="Xue Y."/>
            <person name="Zhu Y."/>
            <person name="Xu X."/>
            <person name="Sun L."/>
            <person name="Chen S."/>
            <person name="Nie H."/>
            <person name="Peng J."/>
            <person name="Xu J."/>
            <person name="Wang Y."/>
            <person name="Yuan Z."/>
            <person name="Wen Y."/>
            <person name="Yao Z."/>
            <person name="Shen Y."/>
            <person name="Qiang B."/>
            <person name="Hou Y."/>
            <person name="Yu J."/>
            <person name="Jin Q."/>
        </authorList>
    </citation>
    <scope>NUCLEOTIDE SEQUENCE [LARGE SCALE GENOMIC DNA]</scope>
    <source>
        <strain>Ss046</strain>
    </source>
</reference>
<feature type="initiator methionine" description="Removed" evidence="1">
    <location>
        <position position="1"/>
    </location>
</feature>
<feature type="chain" id="PRO_0000225893" description="Small ribosomal subunit protein uS8">
    <location>
        <begin position="2"/>
        <end position="130"/>
    </location>
</feature>
<keyword id="KW-1185">Reference proteome</keyword>
<keyword id="KW-0687">Ribonucleoprotein</keyword>
<keyword id="KW-0689">Ribosomal protein</keyword>
<keyword id="KW-0694">RNA-binding</keyword>
<keyword id="KW-0699">rRNA-binding</keyword>